<accession>P9WP66</accession>
<accession>L0T941</accession>
<accession>P63856</accession>
<accession>Q10385</accession>
<dbReference type="EC" id="7.1.1.9"/>
<dbReference type="EMBL" id="AE000516">
    <property type="protein sequence ID" value="AAK46535.1"/>
    <property type="molecule type" value="Genomic_DNA"/>
</dbReference>
<dbReference type="PIR" id="B70784">
    <property type="entry name" value="B70784"/>
</dbReference>
<dbReference type="RefSeq" id="WP_003411389.1">
    <property type="nucleotide sequence ID" value="NZ_KK341227.1"/>
</dbReference>
<dbReference type="SMR" id="P9WP66"/>
<dbReference type="KEGG" id="mtc:MT2249"/>
<dbReference type="PATRIC" id="fig|83331.31.peg.2424"/>
<dbReference type="HOGENOM" id="CLU_044071_1_1_11"/>
<dbReference type="Proteomes" id="UP000001020">
    <property type="component" value="Chromosome"/>
</dbReference>
<dbReference type="GO" id="GO:0005886">
    <property type="term" value="C:plasma membrane"/>
    <property type="evidence" value="ECO:0007669"/>
    <property type="project" value="UniProtKB-SubCell"/>
</dbReference>
<dbReference type="GO" id="GO:0004129">
    <property type="term" value="F:cytochrome-c oxidase activity"/>
    <property type="evidence" value="ECO:0007669"/>
    <property type="project" value="UniProtKB-EC"/>
</dbReference>
<dbReference type="GO" id="GO:0019646">
    <property type="term" value="P:aerobic electron transport chain"/>
    <property type="evidence" value="ECO:0007669"/>
    <property type="project" value="InterPro"/>
</dbReference>
<dbReference type="CDD" id="cd00386">
    <property type="entry name" value="Heme_Cu_Oxidase_III_like"/>
    <property type="match status" value="1"/>
</dbReference>
<dbReference type="FunFam" id="1.20.120.80:FF:000001">
    <property type="entry name" value="Cytochrome (Ubi)quinol oxidase subunit III"/>
    <property type="match status" value="1"/>
</dbReference>
<dbReference type="Gene3D" id="1.20.120.80">
    <property type="entry name" value="Cytochrome c oxidase, subunit III, four-helix bundle"/>
    <property type="match status" value="1"/>
</dbReference>
<dbReference type="InterPro" id="IPR024791">
    <property type="entry name" value="Cyt_c/ubiquinol_Oxase_su3"/>
</dbReference>
<dbReference type="InterPro" id="IPR000298">
    <property type="entry name" value="Cyt_c_oxidase-like_su3"/>
</dbReference>
<dbReference type="InterPro" id="IPR035973">
    <property type="entry name" value="Cyt_c_oxidase_su3-like_sf"/>
</dbReference>
<dbReference type="InterPro" id="IPR013833">
    <property type="entry name" value="Cyt_c_oxidase_su3_a-hlx"/>
</dbReference>
<dbReference type="PANTHER" id="PTHR11403:SF2">
    <property type="entry name" value="CYTOCHROME BO(3) UBIQUINOL OXIDASE SUBUNIT 3"/>
    <property type="match status" value="1"/>
</dbReference>
<dbReference type="PANTHER" id="PTHR11403">
    <property type="entry name" value="CYTOCHROME C OXIDASE SUBUNIT III"/>
    <property type="match status" value="1"/>
</dbReference>
<dbReference type="Pfam" id="PF00510">
    <property type="entry name" value="COX3"/>
    <property type="match status" value="1"/>
</dbReference>
<dbReference type="SUPFAM" id="SSF81452">
    <property type="entry name" value="Cytochrome c oxidase subunit III-like"/>
    <property type="match status" value="1"/>
</dbReference>
<dbReference type="PROSITE" id="PS50253">
    <property type="entry name" value="COX3"/>
    <property type="match status" value="1"/>
</dbReference>
<gene>
    <name type="primary">ctaE</name>
    <name type="ordered locus">MT2249</name>
</gene>
<feature type="chain" id="PRO_0000427005" description="Probable cytochrome c oxidase subunit 3">
    <location>
        <begin position="1"/>
        <end position="203"/>
    </location>
</feature>
<feature type="transmembrane region" description="Helical" evidence="1">
    <location>
        <begin position="30"/>
        <end position="50"/>
    </location>
</feature>
<feature type="transmembrane region" description="Helical" evidence="1">
    <location>
        <begin position="71"/>
        <end position="91"/>
    </location>
</feature>
<feature type="transmembrane region" description="Helical" evidence="1">
    <location>
        <begin position="96"/>
        <end position="116"/>
    </location>
</feature>
<feature type="transmembrane region" description="Helical" evidence="1">
    <location>
        <begin position="143"/>
        <end position="163"/>
    </location>
</feature>
<feature type="transmembrane region" description="Helical" evidence="1">
    <location>
        <begin position="179"/>
        <end position="199"/>
    </location>
</feature>
<keyword id="KW-1003">Cell membrane</keyword>
<keyword id="KW-0472">Membrane</keyword>
<keyword id="KW-1185">Reference proteome</keyword>
<keyword id="KW-1278">Translocase</keyword>
<keyword id="KW-0812">Transmembrane</keyword>
<keyword id="KW-1133">Transmembrane helix</keyword>
<evidence type="ECO:0000255" key="1"/>
<evidence type="ECO:0000305" key="2"/>
<comment type="catalytic activity">
    <reaction>
        <text>4 Fe(II)-[cytochrome c] + O2 + 8 H(+)(in) = 4 Fe(III)-[cytochrome c] + 2 H2O + 4 H(+)(out)</text>
        <dbReference type="Rhea" id="RHEA:11436"/>
        <dbReference type="Rhea" id="RHEA-COMP:10350"/>
        <dbReference type="Rhea" id="RHEA-COMP:14399"/>
        <dbReference type="ChEBI" id="CHEBI:15377"/>
        <dbReference type="ChEBI" id="CHEBI:15378"/>
        <dbReference type="ChEBI" id="CHEBI:15379"/>
        <dbReference type="ChEBI" id="CHEBI:29033"/>
        <dbReference type="ChEBI" id="CHEBI:29034"/>
        <dbReference type="EC" id="7.1.1.9"/>
    </reaction>
</comment>
<comment type="subcellular location">
    <subcellularLocation>
        <location evidence="2">Cell membrane</location>
        <topology evidence="2">Multi-pass membrane protein</topology>
    </subcellularLocation>
</comment>
<comment type="similarity">
    <text evidence="2">Belongs to the cytochrome c oxidase subunit 3 family.</text>
</comment>
<organism>
    <name type="scientific">Mycobacterium tuberculosis (strain CDC 1551 / Oshkosh)</name>
    <dbReference type="NCBI Taxonomy" id="83331"/>
    <lineage>
        <taxon>Bacteria</taxon>
        <taxon>Bacillati</taxon>
        <taxon>Actinomycetota</taxon>
        <taxon>Actinomycetes</taxon>
        <taxon>Mycobacteriales</taxon>
        <taxon>Mycobacteriaceae</taxon>
        <taxon>Mycobacterium</taxon>
        <taxon>Mycobacterium tuberculosis complex</taxon>
    </lineage>
</organism>
<reference key="1">
    <citation type="journal article" date="2002" name="J. Bacteriol.">
        <title>Whole-genome comparison of Mycobacterium tuberculosis clinical and laboratory strains.</title>
        <authorList>
            <person name="Fleischmann R.D."/>
            <person name="Alland D."/>
            <person name="Eisen J.A."/>
            <person name="Carpenter L."/>
            <person name="White O."/>
            <person name="Peterson J.D."/>
            <person name="DeBoy R.T."/>
            <person name="Dodson R.J."/>
            <person name="Gwinn M.L."/>
            <person name="Haft D.H."/>
            <person name="Hickey E.K."/>
            <person name="Kolonay J.F."/>
            <person name="Nelson W.C."/>
            <person name="Umayam L.A."/>
            <person name="Ermolaeva M.D."/>
            <person name="Salzberg S.L."/>
            <person name="Delcher A."/>
            <person name="Utterback T.R."/>
            <person name="Weidman J.F."/>
            <person name="Khouri H.M."/>
            <person name="Gill J."/>
            <person name="Mikula A."/>
            <person name="Bishai W."/>
            <person name="Jacobs W.R. Jr."/>
            <person name="Venter J.C."/>
            <person name="Fraser C.M."/>
        </authorList>
    </citation>
    <scope>NUCLEOTIDE SEQUENCE [LARGE SCALE GENOMIC DNA]</scope>
    <source>
        <strain>CDC 1551 / Oshkosh</strain>
    </source>
</reference>
<protein>
    <recommendedName>
        <fullName>Probable cytochrome c oxidase subunit 3</fullName>
        <ecNumber>7.1.1.9</ecNumber>
    </recommendedName>
    <alternativeName>
        <fullName>Cytochrome aa3 subunit 3</fullName>
    </alternativeName>
    <alternativeName>
        <fullName>Cytochrome c oxidase polypeptide III</fullName>
    </alternativeName>
</protein>
<proteinExistence type="inferred from homology"/>
<sequence>MTSAVGTSGTAITSRVHSLNRPNMVSVGTIVWLSSELMFFAGLFAFYFSARAQAGGNWPPPPTELNLYQAVPVTLVLIASSFTCQMGVFAAERGDIFGLRRWYVITFLMGLFFVLGQAYEYRNLMSHGTSIPSSAYGSVFYLATGFHGLHVTGGLIAFIFLLVRTGMSKFTPAQATASIVVSYYWHFVDIVWIALFTVIYFIR</sequence>
<name>COX3_MYCTO</name>